<comment type="function">
    <text evidence="1">May protect the nitrogenase Fe-Mo protein from oxidative damage.</text>
</comment>
<comment type="subunit">
    <text evidence="1">Homotrimer; associates with NifD.</text>
</comment>
<comment type="similarity">
    <text evidence="1">Belongs to the NifW family.</text>
</comment>
<proteinExistence type="inferred from homology"/>
<dbReference type="EMBL" id="CP000613">
    <property type="protein sequence ID" value="ACJ01043.1"/>
    <property type="molecule type" value="Genomic_DNA"/>
</dbReference>
<dbReference type="RefSeq" id="WP_012568816.1">
    <property type="nucleotide sequence ID" value="NC_011420.2"/>
</dbReference>
<dbReference type="SMR" id="B6IXL9"/>
<dbReference type="STRING" id="414684.RC1_3694"/>
<dbReference type="KEGG" id="rce:RC1_3694"/>
<dbReference type="eggNOG" id="ENOG50330W8">
    <property type="taxonomic scope" value="Bacteria"/>
</dbReference>
<dbReference type="HOGENOM" id="CLU_145318_0_0_5"/>
<dbReference type="OrthoDB" id="9811868at2"/>
<dbReference type="Proteomes" id="UP000001591">
    <property type="component" value="Chromosome"/>
</dbReference>
<dbReference type="GO" id="GO:0009399">
    <property type="term" value="P:nitrogen fixation"/>
    <property type="evidence" value="ECO:0007669"/>
    <property type="project" value="UniProtKB-UniRule"/>
</dbReference>
<dbReference type="HAMAP" id="MF_00529">
    <property type="entry name" value="NifW"/>
    <property type="match status" value="1"/>
</dbReference>
<dbReference type="InterPro" id="IPR004893">
    <property type="entry name" value="NifW"/>
</dbReference>
<dbReference type="NCBIfam" id="NF002009">
    <property type="entry name" value="PRK00810.1"/>
    <property type="match status" value="1"/>
</dbReference>
<dbReference type="Pfam" id="PF03206">
    <property type="entry name" value="NifW"/>
    <property type="match status" value="1"/>
</dbReference>
<dbReference type="PIRSF" id="PIRSF005790">
    <property type="entry name" value="NifW"/>
    <property type="match status" value="1"/>
</dbReference>
<evidence type="ECO:0000255" key="1">
    <source>
        <dbReference type="HAMAP-Rule" id="MF_00529"/>
    </source>
</evidence>
<sequence length="105" mass="11816">MRLIDTLMRLSAAEEFFEVLAVPYDPAVLRVARLHILRRMGERLSGTDLAALPDGAVRALARSALEAAYAEFTRTRPIDARVFQVLKTARHPRGRSFVPLSSLRR</sequence>
<gene>
    <name evidence="1" type="primary">nifW</name>
    <name type="ordered locus">RC1_3694</name>
</gene>
<protein>
    <recommendedName>
        <fullName evidence="1">Nitrogenase-stabilizing/protective protein NifW</fullName>
    </recommendedName>
</protein>
<organism>
    <name type="scientific">Rhodospirillum centenum (strain ATCC 51521 / SW)</name>
    <dbReference type="NCBI Taxonomy" id="414684"/>
    <lineage>
        <taxon>Bacteria</taxon>
        <taxon>Pseudomonadati</taxon>
        <taxon>Pseudomonadota</taxon>
        <taxon>Alphaproteobacteria</taxon>
        <taxon>Rhodospirillales</taxon>
        <taxon>Rhodospirillaceae</taxon>
        <taxon>Rhodospirillum</taxon>
    </lineage>
</organism>
<keyword id="KW-0535">Nitrogen fixation</keyword>
<keyword id="KW-1185">Reference proteome</keyword>
<accession>B6IXL9</accession>
<reference key="1">
    <citation type="submission" date="2007-03" db="EMBL/GenBank/DDBJ databases">
        <title>Genome sequence of Rhodospirillum centenum.</title>
        <authorList>
            <person name="Touchman J.W."/>
            <person name="Bauer C."/>
            <person name="Blankenship R.E."/>
        </authorList>
    </citation>
    <scope>NUCLEOTIDE SEQUENCE [LARGE SCALE GENOMIC DNA]</scope>
    <source>
        <strain>ATCC 51521 / SW</strain>
    </source>
</reference>
<feature type="chain" id="PRO_1000146302" description="Nitrogenase-stabilizing/protective protein NifW">
    <location>
        <begin position="1"/>
        <end position="105"/>
    </location>
</feature>
<name>NIFW_RHOCS</name>